<proteinExistence type="predicted"/>
<sequence>MKCNKMNRVQLKEGSVSMTL</sequence>
<evidence type="ECO:0000256" key="1">
    <source>
        <dbReference type="SAM" id="MobiDB-lite"/>
    </source>
</evidence>
<organism>
    <name type="scientific">Bacillus subtilis (strain 168)</name>
    <dbReference type="NCBI Taxonomy" id="224308"/>
    <lineage>
        <taxon>Bacteria</taxon>
        <taxon>Bacillati</taxon>
        <taxon>Bacillota</taxon>
        <taxon>Bacilli</taxon>
        <taxon>Bacillales</taxon>
        <taxon>Bacillaceae</taxon>
        <taxon>Bacillus</taxon>
    </lineage>
</organism>
<gene>
    <name type="primary">tetL</name>
    <name type="ordered locus">BSU40780</name>
</gene>
<protein>
    <recommendedName>
        <fullName>Tetracycline resistance leader peptide</fullName>
    </recommendedName>
</protein>
<name>LPTR_BACSU</name>
<keyword id="KW-0046">Antibiotic resistance</keyword>
<keyword id="KW-0428">Leader peptide</keyword>
<keyword id="KW-1185">Reference proteome</keyword>
<dbReference type="EMBL" id="X08034">
    <property type="protein sequence ID" value="CAA30826.1"/>
    <property type="molecule type" value="Genomic_DNA"/>
</dbReference>
<dbReference type="EMBL" id="X58999">
    <property type="protein sequence ID" value="CAA41744.1"/>
    <property type="molecule type" value="Genomic_DNA"/>
</dbReference>
<dbReference type="EMBL" id="AL009126">
    <property type="protein sequence ID" value="CAB16115.1"/>
    <property type="molecule type" value="Genomic_DNA"/>
</dbReference>
<dbReference type="PIR" id="S04802">
    <property type="entry name" value="LFBSTT"/>
</dbReference>
<dbReference type="RefSeq" id="NP_391958.1">
    <property type="nucleotide sequence ID" value="NC_000964.3"/>
</dbReference>
<dbReference type="FunCoup" id="P23053">
    <property type="interactions" value="4"/>
</dbReference>
<dbReference type="STRING" id="224308.BSU40780"/>
<dbReference type="PaxDb" id="224308-BSU40780"/>
<dbReference type="EnsemblBacteria" id="CAB16115">
    <property type="protein sequence ID" value="CAB16115"/>
    <property type="gene ID" value="BSU_40780"/>
</dbReference>
<dbReference type="GeneID" id="937940"/>
<dbReference type="InParanoid" id="P23053"/>
<dbReference type="BioCyc" id="BSUB:BSU40780-MONOMER"/>
<dbReference type="Proteomes" id="UP000001570">
    <property type="component" value="Chromosome"/>
</dbReference>
<dbReference type="GO" id="GO:0046677">
    <property type="term" value="P:response to antibiotic"/>
    <property type="evidence" value="ECO:0007669"/>
    <property type="project" value="UniProtKB-KW"/>
</dbReference>
<dbReference type="InterPro" id="IPR012618">
    <property type="entry name" value="Tet-R_leader_TetL"/>
</dbReference>
<dbReference type="NCBIfam" id="NF033685">
    <property type="entry name" value="Tet_leader_L"/>
    <property type="match status" value="1"/>
</dbReference>
<dbReference type="Pfam" id="PF08050">
    <property type="entry name" value="Tet_res_leader"/>
    <property type="match status" value="1"/>
</dbReference>
<reference key="1">
    <citation type="journal article" date="1988" name="Biochim. Biophys. Acta">
        <title>Nucleotide sequence homology of the tetracycline-resistance determinant naturally maintained in Bacillus subtilis Marburg 168 chromosome and the tetracycline-resistance gene of B. subtilis plasmid pNS1981.</title>
        <authorList>
            <person name="Sakaguchi R."/>
            <person name="Amano H."/>
            <person name="Shishido K."/>
        </authorList>
    </citation>
    <scope>NUCLEOTIDE SEQUENCE [GENOMIC DNA]</scope>
    <source>
        <strain>168</strain>
    </source>
</reference>
<reference key="2">
    <citation type="journal article" date="1991" name="FEMS Microbiol. Lett.">
        <title>An insertion of Escherichia coli transposable element IS1K into the site immediately before tetracycline-resistance determinant of Bacillus subtilis chromosomal DNA fragment in cloning in E. coli.</title>
        <authorList>
            <person name="Amano H."/>
            <person name="Sakaguchi R."/>
            <person name="Shishido K."/>
        </authorList>
    </citation>
    <scope>NUCLEOTIDE SEQUENCE [GENOMIC DNA]</scope>
</reference>
<reference key="3">
    <citation type="journal article" date="1997" name="Nature">
        <title>The complete genome sequence of the Gram-positive bacterium Bacillus subtilis.</title>
        <authorList>
            <person name="Kunst F."/>
            <person name="Ogasawara N."/>
            <person name="Moszer I."/>
            <person name="Albertini A.M."/>
            <person name="Alloni G."/>
            <person name="Azevedo V."/>
            <person name="Bertero M.G."/>
            <person name="Bessieres P."/>
            <person name="Bolotin A."/>
            <person name="Borchert S."/>
            <person name="Borriss R."/>
            <person name="Boursier L."/>
            <person name="Brans A."/>
            <person name="Braun M."/>
            <person name="Brignell S.C."/>
            <person name="Bron S."/>
            <person name="Brouillet S."/>
            <person name="Bruschi C.V."/>
            <person name="Caldwell B."/>
            <person name="Capuano V."/>
            <person name="Carter N.M."/>
            <person name="Choi S.-K."/>
            <person name="Codani J.-J."/>
            <person name="Connerton I.F."/>
            <person name="Cummings N.J."/>
            <person name="Daniel R.A."/>
            <person name="Denizot F."/>
            <person name="Devine K.M."/>
            <person name="Duesterhoeft A."/>
            <person name="Ehrlich S.D."/>
            <person name="Emmerson P.T."/>
            <person name="Entian K.-D."/>
            <person name="Errington J."/>
            <person name="Fabret C."/>
            <person name="Ferrari E."/>
            <person name="Foulger D."/>
            <person name="Fritz C."/>
            <person name="Fujita M."/>
            <person name="Fujita Y."/>
            <person name="Fuma S."/>
            <person name="Galizzi A."/>
            <person name="Galleron N."/>
            <person name="Ghim S.-Y."/>
            <person name="Glaser P."/>
            <person name="Goffeau A."/>
            <person name="Golightly E.J."/>
            <person name="Grandi G."/>
            <person name="Guiseppi G."/>
            <person name="Guy B.J."/>
            <person name="Haga K."/>
            <person name="Haiech J."/>
            <person name="Harwood C.R."/>
            <person name="Henaut A."/>
            <person name="Hilbert H."/>
            <person name="Holsappel S."/>
            <person name="Hosono S."/>
            <person name="Hullo M.-F."/>
            <person name="Itaya M."/>
            <person name="Jones L.-M."/>
            <person name="Joris B."/>
            <person name="Karamata D."/>
            <person name="Kasahara Y."/>
            <person name="Klaerr-Blanchard M."/>
            <person name="Klein C."/>
            <person name="Kobayashi Y."/>
            <person name="Koetter P."/>
            <person name="Koningstein G."/>
            <person name="Krogh S."/>
            <person name="Kumano M."/>
            <person name="Kurita K."/>
            <person name="Lapidus A."/>
            <person name="Lardinois S."/>
            <person name="Lauber J."/>
            <person name="Lazarevic V."/>
            <person name="Lee S.-M."/>
            <person name="Levine A."/>
            <person name="Liu H."/>
            <person name="Masuda S."/>
            <person name="Mauel C."/>
            <person name="Medigue C."/>
            <person name="Medina N."/>
            <person name="Mellado R.P."/>
            <person name="Mizuno M."/>
            <person name="Moestl D."/>
            <person name="Nakai S."/>
            <person name="Noback M."/>
            <person name="Noone D."/>
            <person name="O'Reilly M."/>
            <person name="Ogawa K."/>
            <person name="Ogiwara A."/>
            <person name="Oudega B."/>
            <person name="Park S.-H."/>
            <person name="Parro V."/>
            <person name="Pohl T.M."/>
            <person name="Portetelle D."/>
            <person name="Porwollik S."/>
            <person name="Prescott A.M."/>
            <person name="Presecan E."/>
            <person name="Pujic P."/>
            <person name="Purnelle B."/>
            <person name="Rapoport G."/>
            <person name="Rey M."/>
            <person name="Reynolds S."/>
            <person name="Rieger M."/>
            <person name="Rivolta C."/>
            <person name="Rocha E."/>
            <person name="Roche B."/>
            <person name="Rose M."/>
            <person name="Sadaie Y."/>
            <person name="Sato T."/>
            <person name="Scanlan E."/>
            <person name="Schleich S."/>
            <person name="Schroeter R."/>
            <person name="Scoffone F."/>
            <person name="Sekiguchi J."/>
            <person name="Sekowska A."/>
            <person name="Seror S.J."/>
            <person name="Serror P."/>
            <person name="Shin B.-S."/>
            <person name="Soldo B."/>
            <person name="Sorokin A."/>
            <person name="Tacconi E."/>
            <person name="Takagi T."/>
            <person name="Takahashi H."/>
            <person name="Takemaru K."/>
            <person name="Takeuchi M."/>
            <person name="Tamakoshi A."/>
            <person name="Tanaka T."/>
            <person name="Terpstra P."/>
            <person name="Tognoni A."/>
            <person name="Tosato V."/>
            <person name="Uchiyama S."/>
            <person name="Vandenbol M."/>
            <person name="Vannier F."/>
            <person name="Vassarotti A."/>
            <person name="Viari A."/>
            <person name="Wambutt R."/>
            <person name="Wedler E."/>
            <person name="Wedler H."/>
            <person name="Weitzenegger T."/>
            <person name="Winters P."/>
            <person name="Wipat A."/>
            <person name="Yamamoto H."/>
            <person name="Yamane K."/>
            <person name="Yasumoto K."/>
            <person name="Yata K."/>
            <person name="Yoshida K."/>
            <person name="Yoshikawa H.-F."/>
            <person name="Zumstein E."/>
            <person name="Yoshikawa H."/>
            <person name="Danchin A."/>
        </authorList>
    </citation>
    <scope>NUCLEOTIDE SEQUENCE [LARGE SCALE GENOMIC DNA]</scope>
    <source>
        <strain>168</strain>
    </source>
</reference>
<accession>P23053</accession>
<feature type="peptide" id="PRO_0000044017" description="Tetracycline resistance leader peptide">
    <location>
        <begin position="1"/>
        <end position="20"/>
    </location>
</feature>
<feature type="region of interest" description="Disordered" evidence="1">
    <location>
        <begin position="1"/>
        <end position="20"/>
    </location>
</feature>